<feature type="chain" id="PRO_0000331821" description="Methionine--tRNA ligase">
    <location>
        <begin position="1"/>
        <end position="677"/>
    </location>
</feature>
<feature type="domain" description="tRNA-binding" evidence="1">
    <location>
        <begin position="575"/>
        <end position="677"/>
    </location>
</feature>
<feature type="short sequence motif" description="'HIGH' region">
    <location>
        <begin position="15"/>
        <end position="25"/>
    </location>
</feature>
<feature type="short sequence motif" description="'KMSKS' region">
    <location>
        <begin position="333"/>
        <end position="337"/>
    </location>
</feature>
<feature type="binding site" evidence="1">
    <location>
        <position position="146"/>
    </location>
    <ligand>
        <name>Zn(2+)</name>
        <dbReference type="ChEBI" id="CHEBI:29105"/>
    </ligand>
</feature>
<feature type="binding site" evidence="1">
    <location>
        <position position="149"/>
    </location>
    <ligand>
        <name>Zn(2+)</name>
        <dbReference type="ChEBI" id="CHEBI:29105"/>
    </ligand>
</feature>
<feature type="binding site" evidence="1">
    <location>
        <position position="159"/>
    </location>
    <ligand>
        <name>Zn(2+)</name>
        <dbReference type="ChEBI" id="CHEBI:29105"/>
    </ligand>
</feature>
<feature type="binding site" evidence="1">
    <location>
        <position position="162"/>
    </location>
    <ligand>
        <name>Zn(2+)</name>
        <dbReference type="ChEBI" id="CHEBI:29105"/>
    </ligand>
</feature>
<feature type="binding site" evidence="1">
    <location>
        <position position="336"/>
    </location>
    <ligand>
        <name>ATP</name>
        <dbReference type="ChEBI" id="CHEBI:30616"/>
    </ligand>
</feature>
<dbReference type="EC" id="6.1.1.10" evidence="1"/>
<dbReference type="EMBL" id="CP000247">
    <property type="protein sequence ID" value="ABG70151.1"/>
    <property type="status" value="ALT_INIT"/>
    <property type="molecule type" value="Genomic_DNA"/>
</dbReference>
<dbReference type="RefSeq" id="WP_001297896.1">
    <property type="nucleotide sequence ID" value="NC_008253.1"/>
</dbReference>
<dbReference type="SMR" id="Q0TFX8"/>
<dbReference type="KEGG" id="ecp:ECP_2152"/>
<dbReference type="HOGENOM" id="CLU_009710_7_0_6"/>
<dbReference type="Proteomes" id="UP000009182">
    <property type="component" value="Chromosome"/>
</dbReference>
<dbReference type="GO" id="GO:0005829">
    <property type="term" value="C:cytosol"/>
    <property type="evidence" value="ECO:0007669"/>
    <property type="project" value="TreeGrafter"/>
</dbReference>
<dbReference type="GO" id="GO:0005524">
    <property type="term" value="F:ATP binding"/>
    <property type="evidence" value="ECO:0007669"/>
    <property type="project" value="UniProtKB-UniRule"/>
</dbReference>
<dbReference type="GO" id="GO:0046872">
    <property type="term" value="F:metal ion binding"/>
    <property type="evidence" value="ECO:0007669"/>
    <property type="project" value="UniProtKB-KW"/>
</dbReference>
<dbReference type="GO" id="GO:0004825">
    <property type="term" value="F:methionine-tRNA ligase activity"/>
    <property type="evidence" value="ECO:0007669"/>
    <property type="project" value="UniProtKB-UniRule"/>
</dbReference>
<dbReference type="GO" id="GO:0000049">
    <property type="term" value="F:tRNA binding"/>
    <property type="evidence" value="ECO:0007669"/>
    <property type="project" value="UniProtKB-KW"/>
</dbReference>
<dbReference type="GO" id="GO:0006431">
    <property type="term" value="P:methionyl-tRNA aminoacylation"/>
    <property type="evidence" value="ECO:0007669"/>
    <property type="project" value="UniProtKB-UniRule"/>
</dbReference>
<dbReference type="CDD" id="cd07957">
    <property type="entry name" value="Anticodon_Ia_Met"/>
    <property type="match status" value="1"/>
</dbReference>
<dbReference type="CDD" id="cd00814">
    <property type="entry name" value="MetRS_core"/>
    <property type="match status" value="1"/>
</dbReference>
<dbReference type="CDD" id="cd02800">
    <property type="entry name" value="tRNA_bind_EcMetRS_like"/>
    <property type="match status" value="1"/>
</dbReference>
<dbReference type="FunFam" id="1.10.730.10:FF:000005">
    <property type="entry name" value="Methionine--tRNA ligase"/>
    <property type="match status" value="1"/>
</dbReference>
<dbReference type="FunFam" id="2.20.28.20:FF:000001">
    <property type="entry name" value="Methionine--tRNA ligase"/>
    <property type="match status" value="1"/>
</dbReference>
<dbReference type="FunFam" id="2.40.50.140:FF:000042">
    <property type="entry name" value="Methionine--tRNA ligase"/>
    <property type="match status" value="1"/>
</dbReference>
<dbReference type="Gene3D" id="3.40.50.620">
    <property type="entry name" value="HUPs"/>
    <property type="match status" value="1"/>
</dbReference>
<dbReference type="Gene3D" id="1.10.730.10">
    <property type="entry name" value="Isoleucyl-tRNA Synthetase, Domain 1"/>
    <property type="match status" value="1"/>
</dbReference>
<dbReference type="Gene3D" id="2.20.28.20">
    <property type="entry name" value="Methionyl-tRNA synthetase, Zn-domain"/>
    <property type="match status" value="1"/>
</dbReference>
<dbReference type="Gene3D" id="2.40.50.140">
    <property type="entry name" value="Nucleic acid-binding proteins"/>
    <property type="match status" value="1"/>
</dbReference>
<dbReference type="HAMAP" id="MF_00098">
    <property type="entry name" value="Met_tRNA_synth_type1"/>
    <property type="match status" value="1"/>
</dbReference>
<dbReference type="InterPro" id="IPR001412">
    <property type="entry name" value="aa-tRNA-synth_I_CS"/>
</dbReference>
<dbReference type="InterPro" id="IPR041872">
    <property type="entry name" value="Anticodon_Met"/>
</dbReference>
<dbReference type="InterPro" id="IPR004495">
    <property type="entry name" value="Met-tRNA-synth_bsu_C"/>
</dbReference>
<dbReference type="InterPro" id="IPR023458">
    <property type="entry name" value="Met-tRNA_ligase_1"/>
</dbReference>
<dbReference type="InterPro" id="IPR014758">
    <property type="entry name" value="Met-tRNA_synth"/>
</dbReference>
<dbReference type="InterPro" id="IPR015413">
    <property type="entry name" value="Methionyl/Leucyl_tRNA_Synth"/>
</dbReference>
<dbReference type="InterPro" id="IPR033911">
    <property type="entry name" value="MetRS_core"/>
</dbReference>
<dbReference type="InterPro" id="IPR029038">
    <property type="entry name" value="MetRS_Zn"/>
</dbReference>
<dbReference type="InterPro" id="IPR012340">
    <property type="entry name" value="NA-bd_OB-fold"/>
</dbReference>
<dbReference type="InterPro" id="IPR014729">
    <property type="entry name" value="Rossmann-like_a/b/a_fold"/>
</dbReference>
<dbReference type="InterPro" id="IPR002547">
    <property type="entry name" value="tRNA-bd_dom"/>
</dbReference>
<dbReference type="InterPro" id="IPR009080">
    <property type="entry name" value="tRNAsynth_Ia_anticodon-bd"/>
</dbReference>
<dbReference type="NCBIfam" id="TIGR00398">
    <property type="entry name" value="metG"/>
    <property type="match status" value="1"/>
</dbReference>
<dbReference type="NCBIfam" id="TIGR00399">
    <property type="entry name" value="metG_C_term"/>
    <property type="match status" value="1"/>
</dbReference>
<dbReference type="NCBIfam" id="NF001100">
    <property type="entry name" value="PRK00133.1"/>
    <property type="match status" value="1"/>
</dbReference>
<dbReference type="PANTHER" id="PTHR45765">
    <property type="entry name" value="METHIONINE--TRNA LIGASE"/>
    <property type="match status" value="1"/>
</dbReference>
<dbReference type="PANTHER" id="PTHR45765:SF1">
    <property type="entry name" value="METHIONINE--TRNA LIGASE, CYTOPLASMIC"/>
    <property type="match status" value="1"/>
</dbReference>
<dbReference type="Pfam" id="PF19303">
    <property type="entry name" value="Anticodon_3"/>
    <property type="match status" value="1"/>
</dbReference>
<dbReference type="Pfam" id="PF09334">
    <property type="entry name" value="tRNA-synt_1g"/>
    <property type="match status" value="1"/>
</dbReference>
<dbReference type="Pfam" id="PF01588">
    <property type="entry name" value="tRNA_bind"/>
    <property type="match status" value="1"/>
</dbReference>
<dbReference type="PRINTS" id="PR01041">
    <property type="entry name" value="TRNASYNTHMET"/>
</dbReference>
<dbReference type="SUPFAM" id="SSF47323">
    <property type="entry name" value="Anticodon-binding domain of a subclass of class I aminoacyl-tRNA synthetases"/>
    <property type="match status" value="1"/>
</dbReference>
<dbReference type="SUPFAM" id="SSF57770">
    <property type="entry name" value="Methionyl-tRNA synthetase (MetRS), Zn-domain"/>
    <property type="match status" value="1"/>
</dbReference>
<dbReference type="SUPFAM" id="SSF50249">
    <property type="entry name" value="Nucleic acid-binding proteins"/>
    <property type="match status" value="1"/>
</dbReference>
<dbReference type="SUPFAM" id="SSF52374">
    <property type="entry name" value="Nucleotidylyl transferase"/>
    <property type="match status" value="1"/>
</dbReference>
<dbReference type="PROSITE" id="PS00178">
    <property type="entry name" value="AA_TRNA_LIGASE_I"/>
    <property type="match status" value="1"/>
</dbReference>
<dbReference type="PROSITE" id="PS50886">
    <property type="entry name" value="TRBD"/>
    <property type="match status" value="1"/>
</dbReference>
<name>SYM_ECOL5</name>
<accession>Q0TFX8</accession>
<comment type="function">
    <text evidence="1">Is required not only for elongation of protein synthesis but also for the initiation of all mRNA translation through initiator tRNA(fMet) aminoacylation.</text>
</comment>
<comment type="catalytic activity">
    <reaction evidence="1">
        <text>tRNA(Met) + L-methionine + ATP = L-methionyl-tRNA(Met) + AMP + diphosphate</text>
        <dbReference type="Rhea" id="RHEA:13481"/>
        <dbReference type="Rhea" id="RHEA-COMP:9667"/>
        <dbReference type="Rhea" id="RHEA-COMP:9698"/>
        <dbReference type="ChEBI" id="CHEBI:30616"/>
        <dbReference type="ChEBI" id="CHEBI:33019"/>
        <dbReference type="ChEBI" id="CHEBI:57844"/>
        <dbReference type="ChEBI" id="CHEBI:78442"/>
        <dbReference type="ChEBI" id="CHEBI:78530"/>
        <dbReference type="ChEBI" id="CHEBI:456215"/>
        <dbReference type="EC" id="6.1.1.10"/>
    </reaction>
</comment>
<comment type="cofactor">
    <cofactor evidence="1">
        <name>Zn(2+)</name>
        <dbReference type="ChEBI" id="CHEBI:29105"/>
    </cofactor>
    <text evidence="1">Binds 1 zinc ion per subunit.</text>
</comment>
<comment type="subunit">
    <text evidence="1">Homodimer.</text>
</comment>
<comment type="subcellular location">
    <subcellularLocation>
        <location evidence="1">Cytoplasm</location>
    </subcellularLocation>
</comment>
<comment type="similarity">
    <text evidence="1">Belongs to the class-I aminoacyl-tRNA synthetase family. MetG type 1 subfamily.</text>
</comment>
<comment type="sequence caution" evidence="2">
    <conflict type="erroneous initiation">
        <sequence resource="EMBL-CDS" id="ABG70151"/>
    </conflict>
</comment>
<reference key="1">
    <citation type="journal article" date="2006" name="Mol. Microbiol.">
        <title>Role of pathogenicity island-associated integrases in the genome plasticity of uropathogenic Escherichia coli strain 536.</title>
        <authorList>
            <person name="Hochhut B."/>
            <person name="Wilde C."/>
            <person name="Balling G."/>
            <person name="Middendorf B."/>
            <person name="Dobrindt U."/>
            <person name="Brzuszkiewicz E."/>
            <person name="Gottschalk G."/>
            <person name="Carniel E."/>
            <person name="Hacker J."/>
        </authorList>
    </citation>
    <scope>NUCLEOTIDE SEQUENCE [LARGE SCALE GENOMIC DNA]</scope>
    <source>
        <strain>536 / UPEC</strain>
    </source>
</reference>
<sequence>MTQVAKKILVTCALPYANGSIHLGHMLEHIQADVWVRYQRMRGHEVNFICADDAHGTPIMLKAQQLGITPEQMIGEMSQEHQTDFAGFNISYDNYHSTHSEENRQLSELIYSRLKENGFIKNRTISQLYDPEKGMFLPDRFVKGTCPKCKSPDQYGDNCEVCGATYSPTELIEPKSVVSGATPVMRDSEHFFFDLPSFSEMLQAWTRSGALQEQVANKMQEWFESGLQQWDISRDAPYFGFEIPNAPGKYFYVWLDAPIGYMGSFKNLCDKRGDSVSFDKYWKKDSTAELYHFIGKDIVYFHSLFWPAMLEGSNFRKPTNLFVHGYVTVNGAKMSKSRGTFIKASTWLNHFDADSLRYYYTAKLSSRIDDIDLNLEDFVQRVNADIVNKVVNLASRNAGFINKRFDGVLASELADPQLYKTFTDAAEVIGEAWESREFGKAVREIMALADLANRYVDEQAPWVVAKQEGRDADLQAICSMGINLFRVLMTYLKPVLPKLTERAEAFLNTELTWDGIQQPLLGHKVNPFKALYNRIDMKQVEALVEASKEEVKAAAAPVTGPLADDPIQETITFDDFAKVDLRVALIENAEFVEGSDKLLRLTLDLGGEKRNVFSGIRSAYPDPQALIGRHTIMVANLAPRKMRFGISEGMVMAAGPGGKDIFLLSPDAGAKPGHQVK</sequence>
<keyword id="KW-0030">Aminoacyl-tRNA synthetase</keyword>
<keyword id="KW-0067">ATP-binding</keyword>
<keyword id="KW-0963">Cytoplasm</keyword>
<keyword id="KW-0436">Ligase</keyword>
<keyword id="KW-0479">Metal-binding</keyword>
<keyword id="KW-0547">Nucleotide-binding</keyword>
<keyword id="KW-0648">Protein biosynthesis</keyword>
<keyword id="KW-0694">RNA-binding</keyword>
<keyword id="KW-0820">tRNA-binding</keyword>
<keyword id="KW-0862">Zinc</keyword>
<protein>
    <recommendedName>
        <fullName evidence="1">Methionine--tRNA ligase</fullName>
        <ecNumber evidence="1">6.1.1.10</ecNumber>
    </recommendedName>
    <alternativeName>
        <fullName evidence="1">Methionyl-tRNA synthetase</fullName>
        <shortName evidence="1">MetRS</shortName>
    </alternativeName>
</protein>
<organism>
    <name type="scientific">Escherichia coli O6:K15:H31 (strain 536 / UPEC)</name>
    <dbReference type="NCBI Taxonomy" id="362663"/>
    <lineage>
        <taxon>Bacteria</taxon>
        <taxon>Pseudomonadati</taxon>
        <taxon>Pseudomonadota</taxon>
        <taxon>Gammaproteobacteria</taxon>
        <taxon>Enterobacterales</taxon>
        <taxon>Enterobacteriaceae</taxon>
        <taxon>Escherichia</taxon>
    </lineage>
</organism>
<proteinExistence type="inferred from homology"/>
<gene>
    <name evidence="1" type="primary">metG</name>
    <name type="ordered locus">ECP_2152</name>
</gene>
<evidence type="ECO:0000255" key="1">
    <source>
        <dbReference type="HAMAP-Rule" id="MF_00098"/>
    </source>
</evidence>
<evidence type="ECO:0000305" key="2"/>